<reference key="1">
    <citation type="submission" date="2008-01" db="EMBL/GenBank/DDBJ databases">
        <title>Complete sequence of Shewanella halifaxensis HAW-EB4.</title>
        <authorList>
            <consortium name="US DOE Joint Genome Institute"/>
            <person name="Copeland A."/>
            <person name="Lucas S."/>
            <person name="Lapidus A."/>
            <person name="Glavina del Rio T."/>
            <person name="Dalin E."/>
            <person name="Tice H."/>
            <person name="Bruce D."/>
            <person name="Goodwin L."/>
            <person name="Pitluck S."/>
            <person name="Sims D."/>
            <person name="Brettin T."/>
            <person name="Detter J.C."/>
            <person name="Han C."/>
            <person name="Kuske C.R."/>
            <person name="Schmutz J."/>
            <person name="Larimer F."/>
            <person name="Land M."/>
            <person name="Hauser L."/>
            <person name="Kyrpides N."/>
            <person name="Kim E."/>
            <person name="Zhao J.-S."/>
            <person name="Richardson P."/>
        </authorList>
    </citation>
    <scope>NUCLEOTIDE SEQUENCE [LARGE SCALE GENOMIC DNA]</scope>
    <source>
        <strain>HAW-EB4</strain>
    </source>
</reference>
<protein>
    <recommendedName>
        <fullName evidence="1">Small ribosomal subunit protein uS17</fullName>
    </recommendedName>
    <alternativeName>
        <fullName evidence="2">30S ribosomal protein S17</fullName>
    </alternativeName>
</protein>
<organism>
    <name type="scientific">Shewanella halifaxensis (strain HAW-EB4)</name>
    <dbReference type="NCBI Taxonomy" id="458817"/>
    <lineage>
        <taxon>Bacteria</taxon>
        <taxon>Pseudomonadati</taxon>
        <taxon>Pseudomonadota</taxon>
        <taxon>Gammaproteobacteria</taxon>
        <taxon>Alteromonadales</taxon>
        <taxon>Shewanellaceae</taxon>
        <taxon>Shewanella</taxon>
    </lineage>
</organism>
<keyword id="KW-0687">Ribonucleoprotein</keyword>
<keyword id="KW-0689">Ribosomal protein</keyword>
<keyword id="KW-0694">RNA-binding</keyword>
<keyword id="KW-0699">rRNA-binding</keyword>
<dbReference type="EMBL" id="CP000931">
    <property type="protein sequence ID" value="ABZ78665.1"/>
    <property type="molecule type" value="Genomic_DNA"/>
</dbReference>
<dbReference type="RefSeq" id="WP_012279175.1">
    <property type="nucleotide sequence ID" value="NC_010334.1"/>
</dbReference>
<dbReference type="SMR" id="B0TM03"/>
<dbReference type="STRING" id="458817.Shal_4125"/>
<dbReference type="KEGG" id="shl:Shal_4125"/>
<dbReference type="eggNOG" id="COG0186">
    <property type="taxonomic scope" value="Bacteria"/>
</dbReference>
<dbReference type="HOGENOM" id="CLU_073626_1_1_6"/>
<dbReference type="OrthoDB" id="9811714at2"/>
<dbReference type="Proteomes" id="UP000001317">
    <property type="component" value="Chromosome"/>
</dbReference>
<dbReference type="GO" id="GO:0022627">
    <property type="term" value="C:cytosolic small ribosomal subunit"/>
    <property type="evidence" value="ECO:0007669"/>
    <property type="project" value="TreeGrafter"/>
</dbReference>
<dbReference type="GO" id="GO:0019843">
    <property type="term" value="F:rRNA binding"/>
    <property type="evidence" value="ECO:0007669"/>
    <property type="project" value="UniProtKB-UniRule"/>
</dbReference>
<dbReference type="GO" id="GO:0003735">
    <property type="term" value="F:structural constituent of ribosome"/>
    <property type="evidence" value="ECO:0007669"/>
    <property type="project" value="InterPro"/>
</dbReference>
<dbReference type="GO" id="GO:0006412">
    <property type="term" value="P:translation"/>
    <property type="evidence" value="ECO:0007669"/>
    <property type="project" value="UniProtKB-UniRule"/>
</dbReference>
<dbReference type="CDD" id="cd00364">
    <property type="entry name" value="Ribosomal_uS17"/>
    <property type="match status" value="1"/>
</dbReference>
<dbReference type="FunFam" id="2.40.50.140:FF:000014">
    <property type="entry name" value="30S ribosomal protein S17"/>
    <property type="match status" value="1"/>
</dbReference>
<dbReference type="Gene3D" id="2.40.50.140">
    <property type="entry name" value="Nucleic acid-binding proteins"/>
    <property type="match status" value="1"/>
</dbReference>
<dbReference type="HAMAP" id="MF_01345_B">
    <property type="entry name" value="Ribosomal_uS17_B"/>
    <property type="match status" value="1"/>
</dbReference>
<dbReference type="InterPro" id="IPR012340">
    <property type="entry name" value="NA-bd_OB-fold"/>
</dbReference>
<dbReference type="InterPro" id="IPR000266">
    <property type="entry name" value="Ribosomal_uS17"/>
</dbReference>
<dbReference type="InterPro" id="IPR019984">
    <property type="entry name" value="Ribosomal_uS17_bact/chlr"/>
</dbReference>
<dbReference type="InterPro" id="IPR019979">
    <property type="entry name" value="Ribosomal_uS17_CS"/>
</dbReference>
<dbReference type="NCBIfam" id="NF004123">
    <property type="entry name" value="PRK05610.1"/>
    <property type="match status" value="1"/>
</dbReference>
<dbReference type="NCBIfam" id="TIGR03635">
    <property type="entry name" value="uS17_bact"/>
    <property type="match status" value="1"/>
</dbReference>
<dbReference type="PANTHER" id="PTHR10744">
    <property type="entry name" value="40S RIBOSOMAL PROTEIN S11 FAMILY MEMBER"/>
    <property type="match status" value="1"/>
</dbReference>
<dbReference type="PANTHER" id="PTHR10744:SF1">
    <property type="entry name" value="SMALL RIBOSOMAL SUBUNIT PROTEIN US17M"/>
    <property type="match status" value="1"/>
</dbReference>
<dbReference type="Pfam" id="PF00366">
    <property type="entry name" value="Ribosomal_S17"/>
    <property type="match status" value="1"/>
</dbReference>
<dbReference type="PRINTS" id="PR00973">
    <property type="entry name" value="RIBOSOMALS17"/>
</dbReference>
<dbReference type="SUPFAM" id="SSF50249">
    <property type="entry name" value="Nucleic acid-binding proteins"/>
    <property type="match status" value="1"/>
</dbReference>
<dbReference type="PROSITE" id="PS00056">
    <property type="entry name" value="RIBOSOMAL_S17"/>
    <property type="match status" value="1"/>
</dbReference>
<name>RS17_SHEHH</name>
<comment type="function">
    <text evidence="1">One of the primary rRNA binding proteins, it binds specifically to the 5'-end of 16S ribosomal RNA.</text>
</comment>
<comment type="subunit">
    <text evidence="1">Part of the 30S ribosomal subunit.</text>
</comment>
<comment type="similarity">
    <text evidence="1">Belongs to the universal ribosomal protein uS17 family.</text>
</comment>
<accession>B0TM03</accession>
<gene>
    <name evidence="1" type="primary">rpsQ</name>
    <name type="ordered locus">Shal_4125</name>
</gene>
<proteinExistence type="inferred from homology"/>
<evidence type="ECO:0000255" key="1">
    <source>
        <dbReference type="HAMAP-Rule" id="MF_01345"/>
    </source>
</evidence>
<evidence type="ECO:0000305" key="2"/>
<sequence>MSDTIRTLQGRVLSDKMDKSITVAIERKVKHPLYGKFIKRTTKIHAHDEQNQCNAGDLVTIRECRPLSKTKSWTLVEVISKA</sequence>
<feature type="chain" id="PRO_1000086857" description="Small ribosomal subunit protein uS17">
    <location>
        <begin position="1"/>
        <end position="82"/>
    </location>
</feature>